<keyword id="KW-0002">3D-structure</keyword>
<keyword id="KW-0131">Cell cycle</keyword>
<keyword id="KW-0132">Cell division</keyword>
<keyword id="KW-0963">Cytoplasm</keyword>
<keyword id="KW-0342">GTP-binding</keyword>
<keyword id="KW-0547">Nucleotide-binding</keyword>
<keyword id="KW-1185">Reference proteome</keyword>
<keyword id="KW-0717">Septation</keyword>
<comment type="function">
    <text evidence="1">Essential cell division protein that forms a contractile ring structure (Z ring) at the future cell division site. The regulation of the ring assembly controls the timing and the location of cell division. One of the functions of the FtsZ ring is to recruit other cell division proteins to the septum to produce a new cell wall between the dividing cells. Binds GTP and shows GTPase activity.</text>
</comment>
<comment type="subunit">
    <text evidence="1">Homodimer. Polymerizes to form a dynamic ring structure in a strictly GTP-dependent manner. Interacts directly with several other division proteins.</text>
</comment>
<comment type="subcellular location">
    <subcellularLocation>
        <location evidence="1">Cytoplasm</location>
    </subcellularLocation>
    <text evidence="1">Assembles at midcell at the inner surface of the cytoplasmic membrane.</text>
</comment>
<comment type="similarity">
    <text evidence="1">Belongs to the FtsZ family.</text>
</comment>
<protein>
    <recommendedName>
        <fullName evidence="1">Cell division protein FtsZ</fullName>
    </recommendedName>
</protein>
<evidence type="ECO:0000255" key="1">
    <source>
        <dbReference type="HAMAP-Rule" id="MF_00909"/>
    </source>
</evidence>
<evidence type="ECO:0000269" key="2">
    <source>
    </source>
</evidence>
<evidence type="ECO:0007829" key="3">
    <source>
        <dbReference type="PDB" id="2R75"/>
    </source>
</evidence>
<organism>
    <name type="scientific">Aquifex aeolicus (strain VF5)</name>
    <dbReference type="NCBI Taxonomy" id="224324"/>
    <lineage>
        <taxon>Bacteria</taxon>
        <taxon>Pseudomonadati</taxon>
        <taxon>Aquificota</taxon>
        <taxon>Aquificia</taxon>
        <taxon>Aquificales</taxon>
        <taxon>Aquificaceae</taxon>
        <taxon>Aquifex</taxon>
    </lineage>
</organism>
<accession>O66809</accession>
<name>FTSZ_AQUAE</name>
<feature type="chain" id="PRO_0000114338" description="Cell division protein FtsZ">
    <location>
        <begin position="1"/>
        <end position="367"/>
    </location>
</feature>
<feature type="binding site" evidence="1 2">
    <location>
        <begin position="17"/>
        <end position="21"/>
    </location>
    <ligand>
        <name>GTP</name>
        <dbReference type="ChEBI" id="CHEBI:37565"/>
    </ligand>
</feature>
<feature type="binding site" evidence="1 2">
    <location>
        <begin position="104"/>
        <end position="106"/>
    </location>
    <ligand>
        <name>GTP</name>
        <dbReference type="ChEBI" id="CHEBI:37565"/>
    </ligand>
</feature>
<feature type="binding site" evidence="1 2">
    <location>
        <position position="135"/>
    </location>
    <ligand>
        <name>GTP</name>
        <dbReference type="ChEBI" id="CHEBI:37565"/>
    </ligand>
</feature>
<feature type="binding site" evidence="1">
    <location>
        <position position="139"/>
    </location>
    <ligand>
        <name>GTP</name>
        <dbReference type="ChEBI" id="CHEBI:37565"/>
    </ligand>
</feature>
<feature type="binding site" evidence="1 2">
    <location>
        <position position="183"/>
    </location>
    <ligand>
        <name>GTP</name>
        <dbReference type="ChEBI" id="CHEBI:37565"/>
    </ligand>
</feature>
<feature type="strand" evidence="3">
    <location>
        <begin position="10"/>
        <end position="15"/>
    </location>
</feature>
<feature type="helix" evidence="3">
    <location>
        <begin position="16"/>
        <end position="28"/>
    </location>
</feature>
<feature type="strand" evidence="3">
    <location>
        <begin position="35"/>
        <end position="42"/>
    </location>
</feature>
<feature type="helix" evidence="3">
    <location>
        <begin position="43"/>
        <end position="47"/>
    </location>
</feature>
<feature type="strand" evidence="3">
    <location>
        <begin position="52"/>
        <end position="56"/>
    </location>
</feature>
<feature type="helix" evidence="3">
    <location>
        <begin position="59"/>
        <end position="62"/>
    </location>
</feature>
<feature type="helix" evidence="3">
    <location>
        <begin position="71"/>
        <end position="80"/>
    </location>
</feature>
<feature type="helix" evidence="3">
    <location>
        <begin position="82"/>
        <end position="89"/>
    </location>
</feature>
<feature type="strand" evidence="3">
    <location>
        <begin position="93"/>
        <end position="100"/>
    </location>
</feature>
<feature type="helix" evidence="3">
    <location>
        <begin position="105"/>
        <end position="119"/>
    </location>
</feature>
<feature type="strand" evidence="3">
    <location>
        <begin position="123"/>
        <end position="130"/>
    </location>
</feature>
<feature type="helix" evidence="3">
    <location>
        <begin position="133"/>
        <end position="135"/>
    </location>
</feature>
<feature type="helix" evidence="3">
    <location>
        <begin position="137"/>
        <end position="152"/>
    </location>
</feature>
<feature type="strand" evidence="3">
    <location>
        <begin position="155"/>
        <end position="161"/>
    </location>
</feature>
<feature type="helix" evidence="3">
    <location>
        <begin position="162"/>
        <end position="167"/>
    </location>
</feature>
<feature type="helix" evidence="3">
    <location>
        <begin position="175"/>
        <end position="198"/>
    </location>
</feature>
<feature type="helix" evidence="3">
    <location>
        <begin position="207"/>
        <end position="214"/>
    </location>
</feature>
<feature type="strand" evidence="3">
    <location>
        <begin position="218"/>
        <end position="229"/>
    </location>
</feature>
<feature type="helix" evidence="3">
    <location>
        <begin position="232"/>
        <end position="242"/>
    </location>
</feature>
<feature type="strand" evidence="3">
    <location>
        <begin position="244"/>
        <end position="249"/>
    </location>
</feature>
<feature type="helix" evidence="3">
    <location>
        <begin position="251"/>
        <end position="253"/>
    </location>
</feature>
<feature type="strand" evidence="3">
    <location>
        <begin position="255"/>
        <end position="263"/>
    </location>
</feature>
<feature type="helix" evidence="3">
    <location>
        <begin position="271"/>
        <end position="282"/>
    </location>
</feature>
<feature type="strand" evidence="3">
    <location>
        <begin position="288"/>
        <end position="295"/>
    </location>
</feature>
<feature type="strand" evidence="3">
    <location>
        <begin position="301"/>
        <end position="310"/>
    </location>
</feature>
<feature type="strand" evidence="3">
    <location>
        <begin position="317"/>
        <end position="319"/>
    </location>
</feature>
<feature type="strand" evidence="3">
    <location>
        <begin position="322"/>
        <end position="324"/>
    </location>
</feature>
<dbReference type="EMBL" id="AE000657">
    <property type="protein sequence ID" value="AAC06771.1"/>
    <property type="molecule type" value="Genomic_DNA"/>
</dbReference>
<dbReference type="PIR" id="E70347">
    <property type="entry name" value="E70347"/>
</dbReference>
<dbReference type="RefSeq" id="NP_213369.1">
    <property type="nucleotide sequence ID" value="NC_000918.1"/>
</dbReference>
<dbReference type="RefSeq" id="WP_010880307.1">
    <property type="nucleotide sequence ID" value="NC_000918.1"/>
</dbReference>
<dbReference type="PDB" id="2R6R">
    <property type="method" value="X-ray"/>
    <property type="resolution" value="1.70 A"/>
    <property type="chains" value="1=1-331"/>
</dbReference>
<dbReference type="PDB" id="2R75">
    <property type="method" value="X-ray"/>
    <property type="resolution" value="1.40 A"/>
    <property type="chains" value="1=1-331"/>
</dbReference>
<dbReference type="PDBsum" id="2R6R"/>
<dbReference type="PDBsum" id="2R75"/>
<dbReference type="SMR" id="O66809"/>
<dbReference type="FunCoup" id="O66809">
    <property type="interactions" value="446"/>
</dbReference>
<dbReference type="STRING" id="224324.aq_525"/>
<dbReference type="BindingDB" id="O66809"/>
<dbReference type="EnsemblBacteria" id="AAC06771">
    <property type="protein sequence ID" value="AAC06771"/>
    <property type="gene ID" value="aq_525"/>
</dbReference>
<dbReference type="KEGG" id="aae:aq_525"/>
<dbReference type="PATRIC" id="fig|224324.8.peg.431"/>
<dbReference type="eggNOG" id="COG0206">
    <property type="taxonomic scope" value="Bacteria"/>
</dbReference>
<dbReference type="HOGENOM" id="CLU_024865_0_1_0"/>
<dbReference type="InParanoid" id="O66809"/>
<dbReference type="OrthoDB" id="9813375at2"/>
<dbReference type="EvolutionaryTrace" id="O66809"/>
<dbReference type="Proteomes" id="UP000000798">
    <property type="component" value="Chromosome"/>
</dbReference>
<dbReference type="GO" id="GO:0032153">
    <property type="term" value="C:cell division site"/>
    <property type="evidence" value="ECO:0000318"/>
    <property type="project" value="GO_Central"/>
</dbReference>
<dbReference type="GO" id="GO:0005737">
    <property type="term" value="C:cytoplasm"/>
    <property type="evidence" value="ECO:0000318"/>
    <property type="project" value="GO_Central"/>
</dbReference>
<dbReference type="GO" id="GO:0005525">
    <property type="term" value="F:GTP binding"/>
    <property type="evidence" value="ECO:0000318"/>
    <property type="project" value="GO_Central"/>
</dbReference>
<dbReference type="GO" id="GO:0003924">
    <property type="term" value="F:GTPase activity"/>
    <property type="evidence" value="ECO:0000318"/>
    <property type="project" value="GO_Central"/>
</dbReference>
<dbReference type="GO" id="GO:0051301">
    <property type="term" value="P:cell division"/>
    <property type="evidence" value="ECO:0000318"/>
    <property type="project" value="GO_Central"/>
</dbReference>
<dbReference type="GO" id="GO:0000917">
    <property type="term" value="P:division septum assembly"/>
    <property type="evidence" value="ECO:0007669"/>
    <property type="project" value="UniProtKB-KW"/>
</dbReference>
<dbReference type="GO" id="GO:0043093">
    <property type="term" value="P:FtsZ-dependent cytokinesis"/>
    <property type="evidence" value="ECO:0007669"/>
    <property type="project" value="UniProtKB-UniRule"/>
</dbReference>
<dbReference type="GO" id="GO:0051258">
    <property type="term" value="P:protein polymerization"/>
    <property type="evidence" value="ECO:0007669"/>
    <property type="project" value="UniProtKB-UniRule"/>
</dbReference>
<dbReference type="CDD" id="cd02201">
    <property type="entry name" value="FtsZ_type1"/>
    <property type="match status" value="1"/>
</dbReference>
<dbReference type="FunFam" id="3.40.50.1440:FF:000001">
    <property type="entry name" value="Cell division protein FtsZ"/>
    <property type="match status" value="1"/>
</dbReference>
<dbReference type="Gene3D" id="3.30.1330.20">
    <property type="entry name" value="Tubulin/FtsZ, C-terminal domain"/>
    <property type="match status" value="1"/>
</dbReference>
<dbReference type="Gene3D" id="3.40.50.1440">
    <property type="entry name" value="Tubulin/FtsZ, GTPase domain"/>
    <property type="match status" value="1"/>
</dbReference>
<dbReference type="HAMAP" id="MF_00909">
    <property type="entry name" value="FtsZ"/>
    <property type="match status" value="1"/>
</dbReference>
<dbReference type="InterPro" id="IPR000158">
    <property type="entry name" value="Cell_div_FtsZ"/>
</dbReference>
<dbReference type="InterPro" id="IPR020805">
    <property type="entry name" value="Cell_div_FtsZ_CS"/>
</dbReference>
<dbReference type="InterPro" id="IPR045061">
    <property type="entry name" value="FtsZ/CetZ"/>
</dbReference>
<dbReference type="InterPro" id="IPR024757">
    <property type="entry name" value="FtsZ_C"/>
</dbReference>
<dbReference type="InterPro" id="IPR008280">
    <property type="entry name" value="Tub_FtsZ_C"/>
</dbReference>
<dbReference type="InterPro" id="IPR037103">
    <property type="entry name" value="Tubulin/FtsZ-like_C"/>
</dbReference>
<dbReference type="InterPro" id="IPR018316">
    <property type="entry name" value="Tubulin/FtsZ_2-layer-sand-dom"/>
</dbReference>
<dbReference type="InterPro" id="IPR036525">
    <property type="entry name" value="Tubulin/FtsZ_GTPase_sf"/>
</dbReference>
<dbReference type="InterPro" id="IPR003008">
    <property type="entry name" value="Tubulin_FtsZ_GTPase"/>
</dbReference>
<dbReference type="NCBIfam" id="TIGR00065">
    <property type="entry name" value="ftsZ"/>
    <property type="match status" value="1"/>
</dbReference>
<dbReference type="PANTHER" id="PTHR30314">
    <property type="entry name" value="CELL DIVISION PROTEIN FTSZ-RELATED"/>
    <property type="match status" value="1"/>
</dbReference>
<dbReference type="PANTHER" id="PTHR30314:SF3">
    <property type="entry name" value="MITOCHONDRIAL DIVISION PROTEIN FSZA"/>
    <property type="match status" value="1"/>
</dbReference>
<dbReference type="Pfam" id="PF12327">
    <property type="entry name" value="FtsZ_C"/>
    <property type="match status" value="1"/>
</dbReference>
<dbReference type="Pfam" id="PF00091">
    <property type="entry name" value="Tubulin"/>
    <property type="match status" value="1"/>
</dbReference>
<dbReference type="PRINTS" id="PR00423">
    <property type="entry name" value="CELLDVISFTSZ"/>
</dbReference>
<dbReference type="SMART" id="SM00864">
    <property type="entry name" value="Tubulin"/>
    <property type="match status" value="1"/>
</dbReference>
<dbReference type="SMART" id="SM00865">
    <property type="entry name" value="Tubulin_C"/>
    <property type="match status" value="1"/>
</dbReference>
<dbReference type="SUPFAM" id="SSF55307">
    <property type="entry name" value="Tubulin C-terminal domain-like"/>
    <property type="match status" value="1"/>
</dbReference>
<dbReference type="SUPFAM" id="SSF52490">
    <property type="entry name" value="Tubulin nucleotide-binding domain-like"/>
    <property type="match status" value="1"/>
</dbReference>
<dbReference type="PROSITE" id="PS01134">
    <property type="entry name" value="FTSZ_1"/>
    <property type="match status" value="1"/>
</dbReference>
<dbReference type="PROSITE" id="PS01135">
    <property type="entry name" value="FTSZ_2"/>
    <property type="match status" value="1"/>
</dbReference>
<gene>
    <name evidence="1" type="primary">ftsZ</name>
    <name type="ordered locus">aq_525</name>
</gene>
<reference key="1">
    <citation type="journal article" date="1998" name="Nature">
        <title>The complete genome of the hyperthermophilic bacterium Aquifex aeolicus.</title>
        <authorList>
            <person name="Deckert G."/>
            <person name="Warren P.V."/>
            <person name="Gaasterland T."/>
            <person name="Young W.G."/>
            <person name="Lenox A.L."/>
            <person name="Graham D.E."/>
            <person name="Overbeek R."/>
            <person name="Snead M.A."/>
            <person name="Keller M."/>
            <person name="Aujay M."/>
            <person name="Huber R."/>
            <person name="Feldman R.A."/>
            <person name="Short J.M."/>
            <person name="Olsen G.J."/>
            <person name="Swanson R.V."/>
        </authorList>
    </citation>
    <scope>NUCLEOTIDE SEQUENCE [LARGE SCALE GENOMIC DNA]</scope>
    <source>
        <strain>VF5</strain>
    </source>
</reference>
<reference key="2">
    <citation type="journal article" date="2007" name="J. Mol. Biol.">
        <title>Structural insights into the conformational variability of FtsZ.</title>
        <authorList>
            <person name="Oliva M.A."/>
            <person name="Trambaiolo D."/>
            <person name="Lowe J."/>
        </authorList>
    </citation>
    <scope>X-RAY CRYSTALLOGRAPHY (1.7 ANGSTROMS) OF 1-331 IN COMPLEX WITH GDP</scope>
</reference>
<reference key="3">
    <citation type="journal article" date="2008" name="Chem. Biol.">
        <title>Probing FtsZ and tubulin with C8-substituted GTP analogs reveals differences in their nucleotide binding sites.</title>
        <authorList>
            <person name="Lappchen T."/>
            <person name="Pinas V.A."/>
            <person name="Hartog A.F."/>
            <person name="Koomen G.J."/>
            <person name="Schaffner-Barbero C."/>
            <person name="Andreu J.M."/>
            <person name="Trambaiolo D."/>
            <person name="Lowe J."/>
            <person name="Juhem A."/>
            <person name="Popov A.V."/>
            <person name="den Blaauwen T."/>
        </authorList>
    </citation>
    <scope>X-RAY CRYSTALLOGRAPHY (1.4 ANGSTROMS) OF 1-331</scope>
</reference>
<sequence>MEEFVNPCKIKVIGVGGGGSNAVNRMYEDGIEGVELYAINTDVQHLSTLKVPNKIQIGEKVTRGLGAGAKPEVGEEAALEDIDKIKEILRDTDMVFISAGLGGGTGTGAAPVIAKTAKEMGILTVAVATLPFRFEGPRKMEKALKGLEKLKESSDAYIVIHNDKIKELSNRTLTIKDAFKEVDSVLSKAVRGITSIVVTPAVINVDFADVRTTLEEGGLSIIGMGEGRGDEKADIAVEKAVTSPLLEGNTIEGARRLLVTIWTSEDIPYDIVDEVMERIHSKVHPEAEIIFGAVLEPQEQDFIRVAIVATDFPEEKFQVGEKEVKFKVIKKEEKEEPKEEPKPLSDTTYLEEEEIPAVIRRKNKRLL</sequence>
<proteinExistence type="evidence at protein level"/>